<organism>
    <name type="scientific">Bovine coronavirus (strain 98TXSF-110-LUN)</name>
    <name type="common">BCoV-LUN</name>
    <name type="synonym">BCV</name>
    <dbReference type="NCBI Taxonomy" id="233264"/>
    <lineage>
        <taxon>Viruses</taxon>
        <taxon>Riboviria</taxon>
        <taxon>Orthornavirae</taxon>
        <taxon>Pisuviricota</taxon>
        <taxon>Pisoniviricetes</taxon>
        <taxon>Nidovirales</taxon>
        <taxon>Cornidovirineae</taxon>
        <taxon>Coronaviridae</taxon>
        <taxon>Orthocoronavirinae</taxon>
        <taxon>Betacoronavirus</taxon>
        <taxon>Embecovirus</taxon>
        <taxon>Betacoronavirus 1</taxon>
    </lineage>
</organism>
<organismHost>
    <name type="scientific">Bos taurus</name>
    <name type="common">Bovine</name>
    <dbReference type="NCBI Taxonomy" id="9913"/>
</organismHost>
<proteinExistence type="inferred from homology"/>
<sequence length="29" mass="3400">MKIKFVFDLLTPDDILHPSNHVNLIIRPI</sequence>
<gene>
    <name type="ORF">4a</name>
</gene>
<reference key="1">
    <citation type="journal article" date="2001" name="J. Gen. Virol.">
        <title>Comparison of genomic and predicted amino acid sequences of respiratory and enteric bovine coronaviruses isolated from the same animal with fatal shipping pneumonia.</title>
        <authorList>
            <person name="Chouljenko V.N."/>
            <person name="Lin X.Q."/>
            <person name="Storz J."/>
            <person name="Kousoulas K.G."/>
            <person name="Gorbalenya A.E."/>
        </authorList>
    </citation>
    <scope>NUCLEOTIDE SEQUENCE [GENOMIC RNA]</scope>
</reference>
<protein>
    <recommendedName>
        <fullName>Truncated non-structural protein of 4.9 kDa</fullName>
        <shortName>Truncated ns4.9</shortName>
    </recommendedName>
    <alternativeName>
        <fullName>Truncated 4.9 kDa accessory protein</fullName>
    </alternativeName>
</protein>
<name>NS49_CVBLU</name>
<comment type="similarity">
    <text evidence="1">Belongs to the coronaviruses ns4.9 protein family.</text>
</comment>
<feature type="chain" id="PRO_0000283941" description="Truncated non-structural protein of 4.9 kDa">
    <location>
        <begin position="1"/>
        <end position="29"/>
    </location>
</feature>
<dbReference type="EMBL" id="AF391542">
    <property type="protein sequence ID" value="AAL57309.1"/>
    <property type="molecule type" value="Genomic_RNA"/>
</dbReference>
<dbReference type="Proteomes" id="UP000008571">
    <property type="component" value="Genome"/>
</dbReference>
<dbReference type="InterPro" id="IPR009314">
    <property type="entry name" value="Corona_NS1"/>
</dbReference>
<dbReference type="Pfam" id="PF06145">
    <property type="entry name" value="Corona_NS1"/>
    <property type="match status" value="1"/>
</dbReference>
<evidence type="ECO:0000305" key="1"/>
<accession>Q8V435</accession>